<gene>
    <name type="primary">BIRC5</name>
</gene>
<reference evidence="6" key="1">
    <citation type="journal article" date="2001" name="Cytogenet. Cell Genet.">
        <title>Isolation and mapping the pig homologs survivin (BIRC5) and effector cell protease receptor 1 (EPR1) genes.</title>
        <authorList>
            <person name="Cirera S."/>
            <person name="Fredholm M."/>
        </authorList>
    </citation>
    <scope>NUCLEOTIDE SEQUENCE [MRNA]</scope>
    <source>
        <tissue evidence="4">Small intestine</tissue>
    </source>
</reference>
<protein>
    <recommendedName>
        <fullName>Baculoviral IAP repeat-containing protein 5</fullName>
    </recommendedName>
    <alternativeName>
        <fullName>Apoptosis inhibitor survivin</fullName>
    </alternativeName>
</protein>
<organism evidence="6">
    <name type="scientific">Sus scrofa</name>
    <name type="common">Pig</name>
    <dbReference type="NCBI Taxonomy" id="9823"/>
    <lineage>
        <taxon>Eukaryota</taxon>
        <taxon>Metazoa</taxon>
        <taxon>Chordata</taxon>
        <taxon>Craniata</taxon>
        <taxon>Vertebrata</taxon>
        <taxon>Euteleostomi</taxon>
        <taxon>Mammalia</taxon>
        <taxon>Eutheria</taxon>
        <taxon>Laurasiatheria</taxon>
        <taxon>Artiodactyla</taxon>
        <taxon>Suina</taxon>
        <taxon>Suidae</taxon>
        <taxon>Sus</taxon>
    </lineage>
</organism>
<name>BIRC5_PIG</name>
<keyword id="KW-0007">Acetylation</keyword>
<keyword id="KW-0053">Apoptosis</keyword>
<keyword id="KW-0131">Cell cycle</keyword>
<keyword id="KW-0132">Cell division</keyword>
<keyword id="KW-0137">Centromere</keyword>
<keyword id="KW-0158">Chromosome</keyword>
<keyword id="KW-0159">Chromosome partition</keyword>
<keyword id="KW-0963">Cytoplasm</keyword>
<keyword id="KW-0206">Cytoskeleton</keyword>
<keyword id="KW-0995">Kinetochore</keyword>
<keyword id="KW-0479">Metal-binding</keyword>
<keyword id="KW-0493">Microtubule</keyword>
<keyword id="KW-0498">Mitosis</keyword>
<keyword id="KW-0539">Nucleus</keyword>
<keyword id="KW-0597">Phosphoprotein</keyword>
<keyword id="KW-0646">Protease inhibitor</keyword>
<keyword id="KW-1185">Reference proteome</keyword>
<keyword id="KW-0678">Repressor</keyword>
<keyword id="KW-0789">Thiol protease inhibitor</keyword>
<keyword id="KW-0804">Transcription</keyword>
<keyword id="KW-0805">Transcription regulation</keyword>
<keyword id="KW-0832">Ubl conjugation</keyword>
<keyword id="KW-0862">Zinc</keyword>
<feature type="chain" id="PRO_0000122358" description="Baculoviral IAP repeat-containing protein 5">
    <location>
        <begin position="1"/>
        <end position="142"/>
    </location>
</feature>
<feature type="repeat" description="BIR" evidence="5">
    <location>
        <begin position="18"/>
        <end position="88"/>
    </location>
</feature>
<feature type="binding site" evidence="2 3">
    <location>
        <position position="57"/>
    </location>
    <ligand>
        <name>Zn(2+)</name>
        <dbReference type="ChEBI" id="CHEBI:29105"/>
    </ligand>
</feature>
<feature type="binding site" evidence="2 3">
    <location>
        <position position="60"/>
    </location>
    <ligand>
        <name>Zn(2+)</name>
        <dbReference type="ChEBI" id="CHEBI:29105"/>
    </ligand>
</feature>
<feature type="binding site" evidence="2 3">
    <location>
        <position position="77"/>
    </location>
    <ligand>
        <name>Zn(2+)</name>
        <dbReference type="ChEBI" id="CHEBI:29105"/>
    </ligand>
</feature>
<feature type="binding site" evidence="2 3">
    <location>
        <position position="84"/>
    </location>
    <ligand>
        <name>Zn(2+)</name>
        <dbReference type="ChEBI" id="CHEBI:29105"/>
    </ligand>
</feature>
<feature type="site" description="Interaction with FBXL7" evidence="2">
    <location>
        <position position="126"/>
    </location>
</feature>
<feature type="modified residue" description="Phosphoserine; by AURKC" evidence="2">
    <location>
        <position position="20"/>
    </location>
</feature>
<feature type="modified residue" description="N6-acetyllysine" evidence="2">
    <location>
        <position position="23"/>
    </location>
</feature>
<feature type="modified residue" description="Phosphothreonine; by CDK1 and CDK15" evidence="2">
    <location>
        <position position="34"/>
    </location>
</feature>
<feature type="modified residue" description="Phosphothreonine" evidence="2">
    <location>
        <position position="48"/>
    </location>
</feature>
<feature type="modified residue" description="N6-acetyllysine" evidence="2">
    <location>
        <position position="90"/>
    </location>
</feature>
<feature type="modified residue" description="N6-acetyllysine" evidence="2">
    <location>
        <position position="110"/>
    </location>
</feature>
<feature type="modified residue" description="N6-acetyllysine" evidence="2">
    <location>
        <position position="112"/>
    </location>
</feature>
<feature type="modified residue" description="N6-acetyllysine" evidence="2">
    <location>
        <position position="115"/>
    </location>
</feature>
<feature type="modified residue" description="Phosphothreonine; by AURKB" evidence="2">
    <location>
        <position position="117"/>
    </location>
</feature>
<feature type="modified residue" description="N6-acetyllysine" evidence="2">
    <location>
        <position position="129"/>
    </location>
</feature>
<evidence type="ECO:0000250" key="1">
    <source>
        <dbReference type="UniProtKB" id="E3SCZ8"/>
    </source>
</evidence>
<evidence type="ECO:0000250" key="2">
    <source>
        <dbReference type="UniProtKB" id="O15392"/>
    </source>
</evidence>
<evidence type="ECO:0000255" key="3">
    <source>
        <dbReference type="PROSITE-ProRule" id="PRU00029"/>
    </source>
</evidence>
<evidence type="ECO:0000269" key="4">
    <source>
    </source>
</evidence>
<evidence type="ECO:0000305" key="5"/>
<evidence type="ECO:0000312" key="6">
    <source>
        <dbReference type="EMBL" id="AAG17540.1"/>
    </source>
</evidence>
<dbReference type="EMBL" id="AF195781">
    <property type="protein sequence ID" value="AAG17540.1"/>
    <property type="molecule type" value="mRNA"/>
</dbReference>
<dbReference type="RefSeq" id="NP_999306.1">
    <property type="nucleotide sequence ID" value="NM_214141.1"/>
</dbReference>
<dbReference type="SMR" id="Q9GLN5"/>
<dbReference type="FunCoup" id="Q9GLN5">
    <property type="interactions" value="728"/>
</dbReference>
<dbReference type="STRING" id="9823.ENSSSCP00000042198"/>
<dbReference type="MEROPS" id="I32.005"/>
<dbReference type="Ensembl" id="ENSSSCT00000043788.3">
    <property type="protein sequence ID" value="ENSSSCP00000042198.1"/>
    <property type="gene ID" value="ENSSSCG00000040486.3"/>
</dbReference>
<dbReference type="Ensembl" id="ENSSSCT00015063258.1">
    <property type="protein sequence ID" value="ENSSSCP00015025364.1"/>
    <property type="gene ID" value="ENSSSCG00015047349.1"/>
</dbReference>
<dbReference type="Ensembl" id="ENSSSCT00025074823.1">
    <property type="protein sequence ID" value="ENSSSCP00025032438.1"/>
    <property type="gene ID" value="ENSSSCG00025054674.1"/>
</dbReference>
<dbReference type="Ensembl" id="ENSSSCT00030011429.1">
    <property type="protein sequence ID" value="ENSSSCP00030005112.1"/>
    <property type="gene ID" value="ENSSSCG00030008392.1"/>
</dbReference>
<dbReference type="Ensembl" id="ENSSSCT00035059517.1">
    <property type="protein sequence ID" value="ENSSSCP00035023930.1"/>
    <property type="gene ID" value="ENSSSCG00035044795.1"/>
</dbReference>
<dbReference type="Ensembl" id="ENSSSCT00040004939.1">
    <property type="protein sequence ID" value="ENSSSCP00040001682.1"/>
    <property type="gene ID" value="ENSSSCG00040003906.1"/>
</dbReference>
<dbReference type="Ensembl" id="ENSSSCT00045055865.1">
    <property type="protein sequence ID" value="ENSSSCP00045038946.1"/>
    <property type="gene ID" value="ENSSSCG00045032699.1"/>
</dbReference>
<dbReference type="Ensembl" id="ENSSSCT00050064331.1">
    <property type="protein sequence ID" value="ENSSSCP00050027711.1"/>
    <property type="gene ID" value="ENSSSCG00050047226.1"/>
</dbReference>
<dbReference type="Ensembl" id="ENSSSCT00055012649.1">
    <property type="protein sequence ID" value="ENSSSCP00055009958.1"/>
    <property type="gene ID" value="ENSSSCG00055006534.1"/>
</dbReference>
<dbReference type="Ensembl" id="ENSSSCT00060076757.1">
    <property type="protein sequence ID" value="ENSSSCP00060033178.1"/>
    <property type="gene ID" value="ENSSSCG00060056330.1"/>
</dbReference>
<dbReference type="Ensembl" id="ENSSSCT00065004098.1">
    <property type="protein sequence ID" value="ENSSSCP00065001634.1"/>
    <property type="gene ID" value="ENSSSCG00065003092.1"/>
</dbReference>
<dbReference type="Ensembl" id="ENSSSCT00070037770.1">
    <property type="protein sequence ID" value="ENSSSCP00070031589.1"/>
    <property type="gene ID" value="ENSSSCG00070019114.1"/>
</dbReference>
<dbReference type="Ensembl" id="ENSSSCT00085009897">
    <property type="protein sequence ID" value="ENSSSCP00085007139"/>
    <property type="gene ID" value="ENSSSCG00085005286"/>
</dbReference>
<dbReference type="Ensembl" id="ENSSSCT00090012674">
    <property type="protein sequence ID" value="ENSSSCP00090008054"/>
    <property type="gene ID" value="ENSSSCG00090007154"/>
</dbReference>
<dbReference type="Ensembl" id="ENSSSCT00105040056">
    <property type="protein sequence ID" value="ENSSSCP00105027823"/>
    <property type="gene ID" value="ENSSSCG00105021014"/>
</dbReference>
<dbReference type="Ensembl" id="ENSSSCT00110059642">
    <property type="protein sequence ID" value="ENSSSCP00110041604"/>
    <property type="gene ID" value="ENSSSCG00110031247"/>
</dbReference>
<dbReference type="Ensembl" id="ENSSSCT00115034058">
    <property type="protein sequence ID" value="ENSSSCP00115032332"/>
    <property type="gene ID" value="ENSSSCG00115019237"/>
</dbReference>
<dbReference type="Ensembl" id="ENSSSCT00130065595">
    <property type="protein sequence ID" value="ENSSSCP00130047056"/>
    <property type="gene ID" value="ENSSSCG00130033572"/>
</dbReference>
<dbReference type="GeneID" id="397266"/>
<dbReference type="KEGG" id="ssc:397266"/>
<dbReference type="CTD" id="332"/>
<dbReference type="VGNC" id="VGNC:85827">
    <property type="gene designation" value="BIRC5"/>
</dbReference>
<dbReference type="GeneTree" id="ENSGT00510000047537"/>
<dbReference type="InParanoid" id="Q9GLN5"/>
<dbReference type="OMA" id="IKMYFYE"/>
<dbReference type="OrthoDB" id="2196114at2759"/>
<dbReference type="Reactome" id="R-SSC-141444">
    <property type="pathway name" value="Amplification of signal from unattached kinetochores via a MAD2 inhibitory signal"/>
</dbReference>
<dbReference type="Reactome" id="R-SSC-2467813">
    <property type="pathway name" value="Separation of Sister Chromatids"/>
</dbReference>
<dbReference type="Reactome" id="R-SSC-2500257">
    <property type="pathway name" value="Resolution of Sister Chromatid Cohesion"/>
</dbReference>
<dbReference type="Reactome" id="R-SSC-4615885">
    <property type="pathway name" value="SUMOylation of DNA replication proteins"/>
</dbReference>
<dbReference type="Reactome" id="R-SSC-5663220">
    <property type="pathway name" value="RHO GTPases Activate Formins"/>
</dbReference>
<dbReference type="Reactome" id="R-SSC-68877">
    <property type="pathway name" value="Mitotic Prometaphase"/>
</dbReference>
<dbReference type="Reactome" id="R-SSC-8951664">
    <property type="pathway name" value="Neddylation"/>
</dbReference>
<dbReference type="Reactome" id="R-SSC-9648025">
    <property type="pathway name" value="EML4 and NUDC in mitotic spindle formation"/>
</dbReference>
<dbReference type="Proteomes" id="UP000008227">
    <property type="component" value="Chromosome 12"/>
</dbReference>
<dbReference type="Proteomes" id="UP000314985">
    <property type="component" value="Chromosome 12"/>
</dbReference>
<dbReference type="Proteomes" id="UP000694570">
    <property type="component" value="Unplaced"/>
</dbReference>
<dbReference type="Proteomes" id="UP000694571">
    <property type="component" value="Unplaced"/>
</dbReference>
<dbReference type="Proteomes" id="UP000694720">
    <property type="component" value="Unplaced"/>
</dbReference>
<dbReference type="Proteomes" id="UP000694722">
    <property type="component" value="Unplaced"/>
</dbReference>
<dbReference type="Proteomes" id="UP000694723">
    <property type="component" value="Unplaced"/>
</dbReference>
<dbReference type="Proteomes" id="UP000694724">
    <property type="component" value="Unplaced"/>
</dbReference>
<dbReference type="Proteomes" id="UP000694725">
    <property type="component" value="Unplaced"/>
</dbReference>
<dbReference type="Proteomes" id="UP000694726">
    <property type="component" value="Unplaced"/>
</dbReference>
<dbReference type="Proteomes" id="UP000694727">
    <property type="component" value="Unplaced"/>
</dbReference>
<dbReference type="Proteomes" id="UP000694728">
    <property type="component" value="Unplaced"/>
</dbReference>
<dbReference type="Bgee" id="ENSSSCG00000040486">
    <property type="expression patterns" value="Expressed in hindlimb bud and 33 other cell types or tissues"/>
</dbReference>
<dbReference type="GO" id="GO:0005814">
    <property type="term" value="C:centriole"/>
    <property type="evidence" value="ECO:0000250"/>
    <property type="project" value="UniProtKB"/>
</dbReference>
<dbReference type="GO" id="GO:0032133">
    <property type="term" value="C:chromosome passenger complex"/>
    <property type="evidence" value="ECO:0000250"/>
    <property type="project" value="UniProtKB"/>
</dbReference>
<dbReference type="GO" id="GO:0000775">
    <property type="term" value="C:chromosome, centromeric region"/>
    <property type="evidence" value="ECO:0000250"/>
    <property type="project" value="UniProtKB"/>
</dbReference>
<dbReference type="GO" id="GO:0005737">
    <property type="term" value="C:cytoplasm"/>
    <property type="evidence" value="ECO:0000250"/>
    <property type="project" value="UniProtKB"/>
</dbReference>
<dbReference type="GO" id="GO:0005881">
    <property type="term" value="C:cytoplasmic microtubule"/>
    <property type="evidence" value="ECO:0000250"/>
    <property type="project" value="UniProtKB"/>
</dbReference>
<dbReference type="GO" id="GO:0005829">
    <property type="term" value="C:cytosol"/>
    <property type="evidence" value="ECO:0000250"/>
    <property type="project" value="UniProtKB"/>
</dbReference>
<dbReference type="GO" id="GO:0031021">
    <property type="term" value="C:interphase microtubule organizing center"/>
    <property type="evidence" value="ECO:0000250"/>
    <property type="project" value="UniProtKB"/>
</dbReference>
<dbReference type="GO" id="GO:0000776">
    <property type="term" value="C:kinetochore"/>
    <property type="evidence" value="ECO:0000250"/>
    <property type="project" value="UniProtKB"/>
</dbReference>
<dbReference type="GO" id="GO:0030496">
    <property type="term" value="C:midbody"/>
    <property type="evidence" value="ECO:0000250"/>
    <property type="project" value="UniProtKB"/>
</dbReference>
<dbReference type="GO" id="GO:0005634">
    <property type="term" value="C:nucleus"/>
    <property type="evidence" value="ECO:0000250"/>
    <property type="project" value="UniProtKB"/>
</dbReference>
<dbReference type="GO" id="GO:0005876">
    <property type="term" value="C:spindle microtubule"/>
    <property type="evidence" value="ECO:0000250"/>
    <property type="project" value="UniProtKB"/>
</dbReference>
<dbReference type="GO" id="GO:0051233">
    <property type="term" value="C:spindle midzone"/>
    <property type="evidence" value="ECO:0000318"/>
    <property type="project" value="GO_Central"/>
</dbReference>
<dbReference type="GO" id="GO:0004869">
    <property type="term" value="F:cysteine-type endopeptidase inhibitor activity"/>
    <property type="evidence" value="ECO:0007669"/>
    <property type="project" value="UniProtKB-KW"/>
</dbReference>
<dbReference type="GO" id="GO:0043027">
    <property type="term" value="F:cysteine-type endopeptidase inhibitor activity involved in apoptotic process"/>
    <property type="evidence" value="ECO:0000250"/>
    <property type="project" value="UniProtKB"/>
</dbReference>
<dbReference type="GO" id="GO:0008017">
    <property type="term" value="F:microtubule binding"/>
    <property type="evidence" value="ECO:0000250"/>
    <property type="project" value="UniProtKB"/>
</dbReference>
<dbReference type="GO" id="GO:0042803">
    <property type="term" value="F:protein homodimerization activity"/>
    <property type="evidence" value="ECO:0000250"/>
    <property type="project" value="UniProtKB"/>
</dbReference>
<dbReference type="GO" id="GO:0015631">
    <property type="term" value="F:tubulin binding"/>
    <property type="evidence" value="ECO:0000250"/>
    <property type="project" value="UniProtKB"/>
</dbReference>
<dbReference type="GO" id="GO:0008270">
    <property type="term" value="F:zinc ion binding"/>
    <property type="evidence" value="ECO:0000250"/>
    <property type="project" value="UniProtKB"/>
</dbReference>
<dbReference type="GO" id="GO:0006915">
    <property type="term" value="P:apoptotic process"/>
    <property type="evidence" value="ECO:0007669"/>
    <property type="project" value="UniProtKB-KW"/>
</dbReference>
<dbReference type="GO" id="GO:0051301">
    <property type="term" value="P:cell division"/>
    <property type="evidence" value="ECO:0000250"/>
    <property type="project" value="UniProtKB"/>
</dbReference>
<dbReference type="GO" id="GO:0007059">
    <property type="term" value="P:chromosome segregation"/>
    <property type="evidence" value="ECO:0000318"/>
    <property type="project" value="GO_Central"/>
</dbReference>
<dbReference type="GO" id="GO:0051303">
    <property type="term" value="P:establishment of chromosome localization"/>
    <property type="evidence" value="ECO:0000250"/>
    <property type="project" value="UniProtKB"/>
</dbReference>
<dbReference type="GO" id="GO:0000086">
    <property type="term" value="P:G2/M transition of mitotic cell cycle"/>
    <property type="evidence" value="ECO:0000250"/>
    <property type="project" value="UniProtKB"/>
</dbReference>
<dbReference type="GO" id="GO:0007127">
    <property type="term" value="P:meiosis I"/>
    <property type="evidence" value="ECO:0007669"/>
    <property type="project" value="Ensembl"/>
</dbReference>
<dbReference type="GO" id="GO:0000281">
    <property type="term" value="P:mitotic cytokinesis"/>
    <property type="evidence" value="ECO:0000250"/>
    <property type="project" value="UniProtKB"/>
</dbReference>
<dbReference type="GO" id="GO:0007094">
    <property type="term" value="P:mitotic spindle assembly checkpoint signaling"/>
    <property type="evidence" value="ECO:0000250"/>
    <property type="project" value="UniProtKB"/>
</dbReference>
<dbReference type="GO" id="GO:0007052">
    <property type="term" value="P:mitotic spindle organization"/>
    <property type="evidence" value="ECO:0000318"/>
    <property type="project" value="GO_Central"/>
</dbReference>
<dbReference type="GO" id="GO:0043066">
    <property type="term" value="P:negative regulation of apoptotic process"/>
    <property type="evidence" value="ECO:0000250"/>
    <property type="project" value="UniProtKB"/>
</dbReference>
<dbReference type="GO" id="GO:0045892">
    <property type="term" value="P:negative regulation of DNA-templated transcription"/>
    <property type="evidence" value="ECO:0000250"/>
    <property type="project" value="UniProtKB"/>
</dbReference>
<dbReference type="GO" id="GO:0043524">
    <property type="term" value="P:negative regulation of neuron apoptotic process"/>
    <property type="evidence" value="ECO:0007669"/>
    <property type="project" value="Ensembl"/>
</dbReference>
<dbReference type="GO" id="GO:0031536">
    <property type="term" value="P:positive regulation of exit from mitosis"/>
    <property type="evidence" value="ECO:0000250"/>
    <property type="project" value="UniProtKB"/>
</dbReference>
<dbReference type="GO" id="GO:0045931">
    <property type="term" value="P:positive regulation of mitotic cell cycle"/>
    <property type="evidence" value="ECO:0000250"/>
    <property type="project" value="UniProtKB"/>
</dbReference>
<dbReference type="GO" id="GO:0031503">
    <property type="term" value="P:protein-containing complex localization"/>
    <property type="evidence" value="ECO:0000250"/>
    <property type="project" value="UniProtKB"/>
</dbReference>
<dbReference type="GO" id="GO:0061178">
    <property type="term" value="P:regulation of insulin secretion involved in cellular response to glucose stimulus"/>
    <property type="evidence" value="ECO:0007669"/>
    <property type="project" value="Ensembl"/>
</dbReference>
<dbReference type="GO" id="GO:0061469">
    <property type="term" value="P:regulation of type B pancreatic cell proliferation"/>
    <property type="evidence" value="ECO:0007669"/>
    <property type="project" value="Ensembl"/>
</dbReference>
<dbReference type="CDD" id="cd00022">
    <property type="entry name" value="BIR"/>
    <property type="match status" value="1"/>
</dbReference>
<dbReference type="FunFam" id="1.10.1170.10:FF:000009">
    <property type="entry name" value="Baculoviral IAP repeat-containing protein 5"/>
    <property type="match status" value="1"/>
</dbReference>
<dbReference type="Gene3D" id="1.10.1170.10">
    <property type="entry name" value="Inhibitor Of Apoptosis Protein (2mihbC-IAP-1), Chain A"/>
    <property type="match status" value="1"/>
</dbReference>
<dbReference type="InterPro" id="IPR051190">
    <property type="entry name" value="Baculoviral_IAP"/>
</dbReference>
<dbReference type="InterPro" id="IPR001370">
    <property type="entry name" value="BIR_rpt"/>
</dbReference>
<dbReference type="PANTHER" id="PTHR46771:SF3">
    <property type="entry name" value="BACULOVIRAL IAP REPEAT-CONTAINING PROTEIN 5"/>
    <property type="match status" value="1"/>
</dbReference>
<dbReference type="PANTHER" id="PTHR46771">
    <property type="entry name" value="DETERIN"/>
    <property type="match status" value="1"/>
</dbReference>
<dbReference type="Pfam" id="PF00653">
    <property type="entry name" value="BIR"/>
    <property type="match status" value="1"/>
</dbReference>
<dbReference type="SMART" id="SM00238">
    <property type="entry name" value="BIR"/>
    <property type="match status" value="1"/>
</dbReference>
<dbReference type="SUPFAM" id="SSF57924">
    <property type="entry name" value="Inhibitor of apoptosis (IAP) repeat"/>
    <property type="match status" value="1"/>
</dbReference>
<dbReference type="PROSITE" id="PS50143">
    <property type="entry name" value="BIR_REPEAT_2"/>
    <property type="match status" value="1"/>
</dbReference>
<accession>Q9GLN5</accession>
<comment type="function">
    <text evidence="2">Multitasking protein that has dual roles in promoting cell proliferation and preventing apoptosis (By similarity). Component of a chromosome passage protein complex (CPC) which is essential for chromosome alignment and segregation during mitosis and cytokinesis (By similarity). Acts as an important regulator of the localization of this complex; directs CPC movement to different locations from the inner centromere during prometaphase to midbody during cytokinesis and participates in the organization of the center spindle by associating with polymerized microtubules (By similarity). Involved in the recruitment of CPC to centromeres during early mitosis via association with histone H3 phosphorylated at 'Thr-3' (H3pT3) during mitosis (By similarity). The complex with RAN plays a role in mitotic spindle formation by serving as a physical scaffold to help deliver the RAN effector molecule TPX2 to microtubules (By similarity). May counteract a default induction of apoptosis in G2/M phase (By similarity). The acetylated form represses STAT3 transactivation of target gene promoters (By similarity). May play a role in neoplasia. Inhibitor of CASP3 and CASP7 (By similarity). Essential for the maintenance of mitochondrial integrity and function (By similarity).</text>
</comment>
<comment type="subunit">
    <text evidence="2">Monomer or homodimer. Exists as a homodimer in the apo state and as a monomer in the CPC-bound state. The monomer protects cells against apoptosis more efficiently than the dimer. Only the dimeric form is capable of enhancing tubulin stability in cells. When phosphorylated, interacts with LAMTOR5/HBXIP; the resulting complex binds pro-CASP9, as well as active CASP9, but much less efficiently. Component of the chromosomal passenger complex (CPC) composed of at least BIRC5/survivin, CDCA8/borealin, INCENP, AURKB or AURKC; in the complex forms a triple-helix bundle-based subcomplex with INCENP and CDCA8. Interacts with JTB. Interacts (via BIR domain) with histone H3 phosphorylated at 'Thr-3' (H3pT3). Interacts with EVI5. Interacts with GTP-bound RAN in both the S and M phases of the cell cycle. Interacts with USP9X. Interacts with tubulin. Interacts with BIRC2/c-IAP1. The acetylated form at Lys-129 interacts with STAT3. The monomeric form deacetylated at Lys-129 interacts with XPO1/CRM1. The monomeric form interacts with XIAP/BIRC4. Both the dimeric and monomeric form can interact with DIABLO/SMAC. Interacts with BIRC6/bruce. Interacts with FBXL7; this interaction facilitates the polyubiquitination and subsequent proteasomal degradation of BIRC5 by the SCF(FBXL7) E3 ubiquitin-protein ligase complex (By similarity).</text>
</comment>
<comment type="subcellular location">
    <subcellularLocation>
        <location evidence="2">Cytoplasm</location>
    </subcellularLocation>
    <subcellularLocation>
        <location evidence="2">Nucleus</location>
    </subcellularLocation>
    <subcellularLocation>
        <location evidence="2">Chromosome</location>
    </subcellularLocation>
    <subcellularLocation>
        <location evidence="2">Chromosome</location>
        <location evidence="2">Centromere</location>
    </subcellularLocation>
    <subcellularLocation>
        <location evidence="2">Cytoplasm</location>
        <location evidence="2">Cytoskeleton</location>
        <location evidence="2">Spindle</location>
    </subcellularLocation>
    <subcellularLocation>
        <location evidence="2">Chromosome</location>
        <location evidence="2">Centromere</location>
        <location evidence="2">Kinetochore</location>
    </subcellularLocation>
    <subcellularLocation>
        <location evidence="2">Midbody</location>
    </subcellularLocation>
    <text evidence="1 2">Localizes at the centromeres from prophase to metaphase, at the spindle midzone during anaphase and a the midbody during telophase and cytokinesis. Accumulates in the nucleus upon treatment with leptomycin B (LMB), a XPO1/CRM1 nuclear export inhibitor (By similarity). Localizes on chromosome arms and inner centromeres from prophase through metaphase. Localizes to kinetochores in metaphase, distributes to the midzone microtubules in anaphase and at telophase, localizes exclusively to the midbody. Colocalizes with AURKB at mitotic chromosomes. Acetylation at Lys-129 directs its localization to the nucleus by enhancing homodimerization and thereby inhibiting XPO1/CRM1-mediated nuclear export (By similarity).</text>
</comment>
<comment type="domain">
    <text evidence="2">The BIR repeat is necessary and sufficient for LAMTOR5 binding.</text>
</comment>
<comment type="PTM">
    <text evidence="2">Ubiquitinated by the Cul9-RING ubiquitin-protein ligase complex, leading to its degradation. Ubiquitination is required for centrosomal targeting. Deubiquitinated by USP35 or USP38; leading to stabilization.</text>
</comment>
<comment type="PTM">
    <text evidence="2">Acetylation at Lys-129 results in its homodimerization, while deacetylation promotes the formation of monomers which heterodimerize with XPO1/CRM1 which facilitates its nuclear export. The acetylated form represses STAT3 transactivation. The dynamic equilibrium between its acetylation and deacetylation at Lys-129 determines its interaction with XPO1/CRM1, its subsequent subcellular localization, and its ability to inhibit STAT3 transactivation.</text>
</comment>
<comment type="PTM">
    <text evidence="2">In vitro phosphorylation at Thr-117 by AURKB prevents interaction with INCENP and localization to mitotic chromosomes. Phosphorylation at Thr-48 by CK2 is critical for its mitotic and anti-apoptotic activities. Phosphorylation at Thr-34 by CDK15 is critical for its anti-apoptotic activity. Phosphorylation at Ser-20 by AURKC is critical for regulation of proper chromosome alignment and segregation, and possibly cytokinesis.</text>
</comment>
<comment type="similarity">
    <text evidence="5">Belongs to the IAP family.</text>
</comment>
<sequence length="142" mass="16298">MSAPSLPPAWQLYLKDHRISTFKNWPFLEGCACTPERMAAAGFIHCPTENEPDLAQCFFCFKELEGWEPDDDPIEEHKKHSSGCAFLSVKKQFEELTLSEFLKLDKERAKNKIAKETNNKQKEFEETAKKVRCAIEQLAASE</sequence>
<proteinExistence type="evidence at transcript level"/>